<accession>O74843</accession>
<proteinExistence type="evidence at protein level"/>
<sequence>MSTASEQARLRRERRLNKIKQGGASRINQILGQNSDDSQSDVRATASEEAVHSETATPVTPMSSGFMEKRDDTFNADQVEYLPSQDYHNLESSPFKLQCDSPYNVPPENMFNQNPDFANFFQAMLQSAKEGSDTNFQGENEQIPQATAPLKNLVEKYAHLLAISIVVIVCYFKHLPLLPWTFTVEACLFSIQFVLDRNNGPSYSLLASLASQLPPPYGAMIRHTTSYVPYFTQLITDACMTIFALGLCCYFYPSLVY</sequence>
<keyword id="KW-0472">Membrane</keyword>
<keyword id="KW-0597">Phosphoprotein</keyword>
<keyword id="KW-1185">Reference proteome</keyword>
<keyword id="KW-0812">Transmembrane</keyword>
<keyword id="KW-1133">Transmembrane helix</keyword>
<evidence type="ECO:0000255" key="1"/>
<evidence type="ECO:0000256" key="2">
    <source>
        <dbReference type="SAM" id="MobiDB-lite"/>
    </source>
</evidence>
<evidence type="ECO:0000269" key="3">
    <source>
    </source>
</evidence>
<evidence type="ECO:0000269" key="4">
    <source>
    </source>
</evidence>
<reference key="1">
    <citation type="journal article" date="2002" name="Nature">
        <title>The genome sequence of Schizosaccharomyces pombe.</title>
        <authorList>
            <person name="Wood V."/>
            <person name="Gwilliam R."/>
            <person name="Rajandream M.A."/>
            <person name="Lyne M.H."/>
            <person name="Lyne R."/>
            <person name="Stewart A."/>
            <person name="Sgouros J.G."/>
            <person name="Peat N."/>
            <person name="Hayles J."/>
            <person name="Baker S.G."/>
            <person name="Basham D."/>
            <person name="Bowman S."/>
            <person name="Brooks K."/>
            <person name="Brown D."/>
            <person name="Brown S."/>
            <person name="Chillingworth T."/>
            <person name="Churcher C.M."/>
            <person name="Collins M."/>
            <person name="Connor R."/>
            <person name="Cronin A."/>
            <person name="Davis P."/>
            <person name="Feltwell T."/>
            <person name="Fraser A."/>
            <person name="Gentles S."/>
            <person name="Goble A."/>
            <person name="Hamlin N."/>
            <person name="Harris D.E."/>
            <person name="Hidalgo J."/>
            <person name="Hodgson G."/>
            <person name="Holroyd S."/>
            <person name="Hornsby T."/>
            <person name="Howarth S."/>
            <person name="Huckle E.J."/>
            <person name="Hunt S."/>
            <person name="Jagels K."/>
            <person name="James K.D."/>
            <person name="Jones L."/>
            <person name="Jones M."/>
            <person name="Leather S."/>
            <person name="McDonald S."/>
            <person name="McLean J."/>
            <person name="Mooney P."/>
            <person name="Moule S."/>
            <person name="Mungall K.L."/>
            <person name="Murphy L.D."/>
            <person name="Niblett D."/>
            <person name="Odell C."/>
            <person name="Oliver K."/>
            <person name="O'Neil S."/>
            <person name="Pearson D."/>
            <person name="Quail M.A."/>
            <person name="Rabbinowitsch E."/>
            <person name="Rutherford K.M."/>
            <person name="Rutter S."/>
            <person name="Saunders D."/>
            <person name="Seeger K."/>
            <person name="Sharp S."/>
            <person name="Skelton J."/>
            <person name="Simmonds M.N."/>
            <person name="Squares R."/>
            <person name="Squares S."/>
            <person name="Stevens K."/>
            <person name="Taylor K."/>
            <person name="Taylor R.G."/>
            <person name="Tivey A."/>
            <person name="Walsh S.V."/>
            <person name="Warren T."/>
            <person name="Whitehead S."/>
            <person name="Woodward J.R."/>
            <person name="Volckaert G."/>
            <person name="Aert R."/>
            <person name="Robben J."/>
            <person name="Grymonprez B."/>
            <person name="Weltjens I."/>
            <person name="Vanstreels E."/>
            <person name="Rieger M."/>
            <person name="Schaefer M."/>
            <person name="Mueller-Auer S."/>
            <person name="Gabel C."/>
            <person name="Fuchs M."/>
            <person name="Duesterhoeft A."/>
            <person name="Fritzc C."/>
            <person name="Holzer E."/>
            <person name="Moestl D."/>
            <person name="Hilbert H."/>
            <person name="Borzym K."/>
            <person name="Langer I."/>
            <person name="Beck A."/>
            <person name="Lehrach H."/>
            <person name="Reinhardt R."/>
            <person name="Pohl T.M."/>
            <person name="Eger P."/>
            <person name="Zimmermann W."/>
            <person name="Wedler H."/>
            <person name="Wambutt R."/>
            <person name="Purnelle B."/>
            <person name="Goffeau A."/>
            <person name="Cadieu E."/>
            <person name="Dreano S."/>
            <person name="Gloux S."/>
            <person name="Lelaure V."/>
            <person name="Mottier S."/>
            <person name="Galibert F."/>
            <person name="Aves S.J."/>
            <person name="Xiang Z."/>
            <person name="Hunt C."/>
            <person name="Moore K."/>
            <person name="Hurst S.M."/>
            <person name="Lucas M."/>
            <person name="Rochet M."/>
            <person name="Gaillardin C."/>
            <person name="Tallada V.A."/>
            <person name="Garzon A."/>
            <person name="Thode G."/>
            <person name="Daga R.R."/>
            <person name="Cruzado L."/>
            <person name="Jimenez J."/>
            <person name="Sanchez M."/>
            <person name="del Rey F."/>
            <person name="Benito J."/>
            <person name="Dominguez A."/>
            <person name="Revuelta J.L."/>
            <person name="Moreno S."/>
            <person name="Armstrong J."/>
            <person name="Forsburg S.L."/>
            <person name="Cerutti L."/>
            <person name="Lowe T."/>
            <person name="McCombie W.R."/>
            <person name="Paulsen I."/>
            <person name="Potashkin J."/>
            <person name="Shpakovski G.V."/>
            <person name="Ussery D."/>
            <person name="Barrell B.G."/>
            <person name="Nurse P."/>
        </authorList>
    </citation>
    <scope>NUCLEOTIDE SEQUENCE [LARGE SCALE GENOMIC DNA]</scope>
    <source>
        <strain>972 / ATCC 24843</strain>
    </source>
</reference>
<reference key="2">
    <citation type="journal article" date="2004" name="Mol. Genet. Genomics">
        <title>Two-hybrid search for proteins that interact with Sad1 and Kms1, two membrane-bound components of the spindle pole body in fission yeast.</title>
        <authorList>
            <person name="Miki F."/>
            <person name="Kurabayashi A."/>
            <person name="Tange Y."/>
            <person name="Okazaki K."/>
            <person name="Shimanuki M."/>
            <person name="Niwa O."/>
        </authorList>
    </citation>
    <scope>INTERACTION WITH KMS1 AND SAD1</scope>
    <scope>SUBCELLULAR LOCATION</scope>
</reference>
<reference key="3">
    <citation type="journal article" date="2008" name="J. Proteome Res.">
        <title>Phosphoproteome analysis of fission yeast.</title>
        <authorList>
            <person name="Wilson-Grady J.T."/>
            <person name="Villen J."/>
            <person name="Gygi S.P."/>
        </authorList>
    </citation>
    <scope>PHOSPHORYLATION [LARGE SCALE ANALYSIS] AT SER-35; SER-132 AND THR-134</scope>
    <scope>IDENTIFICATION BY MASS SPECTROMETRY</scope>
</reference>
<organism>
    <name type="scientific">Schizosaccharomyces pombe (strain 972 / ATCC 24843)</name>
    <name type="common">Fission yeast</name>
    <dbReference type="NCBI Taxonomy" id="284812"/>
    <lineage>
        <taxon>Eukaryota</taxon>
        <taxon>Fungi</taxon>
        <taxon>Dikarya</taxon>
        <taxon>Ascomycota</taxon>
        <taxon>Taphrinomycotina</taxon>
        <taxon>Schizosaccharomycetes</taxon>
        <taxon>Schizosaccharomycetales</taxon>
        <taxon>Schizosaccharomycetaceae</taxon>
        <taxon>Schizosaccharomyces</taxon>
    </lineage>
</organism>
<comment type="subunit">
    <text evidence="3">Interacts with kms1 and sad1.</text>
</comment>
<comment type="interaction">
    <interactant intactId="EBI-1542307">
        <id>O74843</id>
    </interactant>
    <interactant intactId="EBI-1542265">
        <id>P87245</id>
        <label>kms1</label>
    </interactant>
    <organismsDiffer>false</organismsDiffer>
    <experiments>3</experiments>
</comment>
<comment type="interaction">
    <interactant intactId="EBI-1542307">
        <id>O74843</id>
    </interactant>
    <interactant intactId="EBI-929731">
        <id>Q09825</id>
        <label>sad1</label>
    </interactant>
    <organismsDiffer>false</organismsDiffer>
    <experiments>3</experiments>
</comment>
<comment type="subcellular location">
    <subcellularLocation>
        <location evidence="3">Membrane</location>
        <topology evidence="3">Multi-pass membrane protein</topology>
    </subcellularLocation>
</comment>
<name>SIF1_SCHPO</name>
<gene>
    <name type="primary">sif1</name>
    <name type="ORF">SPCC1235.06</name>
</gene>
<dbReference type="EMBL" id="CU329672">
    <property type="protein sequence ID" value="CAA21110.1"/>
    <property type="molecule type" value="Genomic_DNA"/>
</dbReference>
<dbReference type="PIR" id="T40880">
    <property type="entry name" value="T40880"/>
</dbReference>
<dbReference type="RefSeq" id="NP_587732.1">
    <property type="nucleotide sequence ID" value="NM_001022727.2"/>
</dbReference>
<dbReference type="SMR" id="O74843"/>
<dbReference type="BioGRID" id="275652">
    <property type="interactions" value="136"/>
</dbReference>
<dbReference type="IntAct" id="O74843">
    <property type="interactions" value="2"/>
</dbReference>
<dbReference type="STRING" id="284812.O74843"/>
<dbReference type="iPTMnet" id="O74843"/>
<dbReference type="PaxDb" id="4896-SPCC1235.06.1"/>
<dbReference type="EnsemblFungi" id="SPCC1235.06.1">
    <property type="protein sequence ID" value="SPCC1235.06.1:pep"/>
    <property type="gene ID" value="SPCC1235.06"/>
</dbReference>
<dbReference type="GeneID" id="2539080"/>
<dbReference type="KEGG" id="spo:2539080"/>
<dbReference type="PomBase" id="SPCC1235.06">
    <property type="gene designation" value="sif1"/>
</dbReference>
<dbReference type="VEuPathDB" id="FungiDB:SPCC1235.06"/>
<dbReference type="HOGENOM" id="CLU_1090524_0_0_1"/>
<dbReference type="InParanoid" id="O74843"/>
<dbReference type="OMA" id="WIITLEI"/>
<dbReference type="PRO" id="PR:O74843"/>
<dbReference type="Proteomes" id="UP000002485">
    <property type="component" value="Chromosome III"/>
</dbReference>
<dbReference type="GO" id="GO:0005783">
    <property type="term" value="C:endoplasmic reticulum"/>
    <property type="evidence" value="ECO:0007005"/>
    <property type="project" value="PomBase"/>
</dbReference>
<dbReference type="GO" id="GO:0043529">
    <property type="term" value="C:GET complex"/>
    <property type="evidence" value="ECO:0000266"/>
    <property type="project" value="PomBase"/>
</dbReference>
<dbReference type="GO" id="GO:0016020">
    <property type="term" value="C:membrane"/>
    <property type="evidence" value="ECO:0007669"/>
    <property type="project" value="UniProtKB-SubCell"/>
</dbReference>
<dbReference type="GO" id="GO:0032977">
    <property type="term" value="F:membrane insertase activity"/>
    <property type="evidence" value="ECO:0000305"/>
    <property type="project" value="PomBase"/>
</dbReference>
<dbReference type="GO" id="GO:0006890">
    <property type="term" value="P:retrograde vesicle-mediated transport, Golgi to endoplasmic reticulum"/>
    <property type="evidence" value="ECO:0000318"/>
    <property type="project" value="GO_Central"/>
</dbReference>
<dbReference type="GO" id="GO:0071816">
    <property type="term" value="P:tail-anchored membrane protein insertion into ER membrane"/>
    <property type="evidence" value="ECO:0000305"/>
    <property type="project" value="PomBase"/>
</dbReference>
<dbReference type="InterPro" id="IPR028143">
    <property type="entry name" value="Get2/sif1"/>
</dbReference>
<dbReference type="PANTHER" id="PTHR28263">
    <property type="entry name" value="GOLGI TO ER TRAFFIC PROTEIN 2"/>
    <property type="match status" value="1"/>
</dbReference>
<dbReference type="PANTHER" id="PTHR28263:SF1">
    <property type="entry name" value="GOLGI TO ER TRAFFIC PROTEIN 2"/>
    <property type="match status" value="1"/>
</dbReference>
<dbReference type="Pfam" id="PF08690">
    <property type="entry name" value="GET2"/>
    <property type="match status" value="1"/>
</dbReference>
<protein>
    <recommendedName>
        <fullName>Sad1-interacting factor 1</fullName>
    </recommendedName>
</protein>
<feature type="chain" id="PRO_0000097757" description="Sad1-interacting factor 1">
    <location>
        <begin position="1"/>
        <end position="257"/>
    </location>
</feature>
<feature type="transmembrane region" description="Helical" evidence="1">
    <location>
        <begin position="160"/>
        <end position="180"/>
    </location>
</feature>
<feature type="transmembrane region" description="Helical" evidence="1">
    <location>
        <begin position="231"/>
        <end position="251"/>
    </location>
</feature>
<feature type="region of interest" description="Disordered" evidence="2">
    <location>
        <begin position="16"/>
        <end position="68"/>
    </location>
</feature>
<feature type="compositionally biased region" description="Polar residues" evidence="2">
    <location>
        <begin position="26"/>
        <end position="37"/>
    </location>
</feature>
<feature type="compositionally biased region" description="Polar residues" evidence="2">
    <location>
        <begin position="54"/>
        <end position="63"/>
    </location>
</feature>
<feature type="modified residue" description="Phosphoserine" evidence="4">
    <location>
        <position position="35"/>
    </location>
</feature>
<feature type="modified residue" description="Phosphoserine" evidence="4">
    <location>
        <position position="132"/>
    </location>
</feature>
<feature type="modified residue" description="Phosphothreonine" evidence="4">
    <location>
        <position position="134"/>
    </location>
</feature>